<keyword id="KW-0749">Sporulation</keyword>
<dbReference type="EMBL" id="CP000485">
    <property type="protein sequence ID" value="ABK86495.1"/>
    <property type="molecule type" value="Genomic_DNA"/>
</dbReference>
<dbReference type="RefSeq" id="WP_001133509.1">
    <property type="nucleotide sequence ID" value="NC_008600.1"/>
</dbReference>
<dbReference type="SMR" id="A0RH02"/>
<dbReference type="GeneID" id="93007575"/>
<dbReference type="KEGG" id="btl:BALH_3249"/>
<dbReference type="HOGENOM" id="CLU_178266_1_0_9"/>
<dbReference type="GO" id="GO:0030436">
    <property type="term" value="P:asexual sporulation"/>
    <property type="evidence" value="ECO:0007669"/>
    <property type="project" value="UniProtKB-UniRule"/>
</dbReference>
<dbReference type="GO" id="GO:0030435">
    <property type="term" value="P:sporulation resulting in formation of a cellular spore"/>
    <property type="evidence" value="ECO:0007669"/>
    <property type="project" value="UniProtKB-KW"/>
</dbReference>
<dbReference type="HAMAP" id="MF_01506">
    <property type="entry name" value="Tlp"/>
    <property type="match status" value="1"/>
</dbReference>
<dbReference type="InterPro" id="IPR017524">
    <property type="entry name" value="SASP_thioredoxin-like"/>
</dbReference>
<dbReference type="NCBIfam" id="TIGR03090">
    <property type="entry name" value="SASP_tlp"/>
    <property type="match status" value="1"/>
</dbReference>
<dbReference type="Pfam" id="PF19824">
    <property type="entry name" value="Tlp"/>
    <property type="match status" value="1"/>
</dbReference>
<organism>
    <name type="scientific">Bacillus thuringiensis (strain Al Hakam)</name>
    <dbReference type="NCBI Taxonomy" id="412694"/>
    <lineage>
        <taxon>Bacteria</taxon>
        <taxon>Bacillati</taxon>
        <taxon>Bacillota</taxon>
        <taxon>Bacilli</taxon>
        <taxon>Bacillales</taxon>
        <taxon>Bacillaceae</taxon>
        <taxon>Bacillus</taxon>
        <taxon>Bacillus cereus group</taxon>
    </lineage>
</organism>
<name>TLP_BACAH</name>
<feature type="chain" id="PRO_0000296635" description="Small, acid-soluble spore protein Tlp">
    <location>
        <begin position="1"/>
        <end position="65"/>
    </location>
</feature>
<proteinExistence type="inferred from homology"/>
<evidence type="ECO:0000255" key="1">
    <source>
        <dbReference type="HAMAP-Rule" id="MF_01506"/>
    </source>
</evidence>
<accession>A0RH02</accession>
<comment type="subcellular location">
    <subcellularLocation>
        <location evidence="1">Spore core</location>
    </subcellularLocation>
</comment>
<comment type="induction">
    <text evidence="1">Expressed only in the forespore compartment of sporulating cells.</text>
</comment>
<comment type="similarity">
    <text evidence="1">Belongs to the Tlp family.</text>
</comment>
<sequence length="65" mass="7466">MPNPDNRSDNAEKLQEMVQNTIDNFNEAKETAELSNEKDRSAIEAKNQRRLESIDSLKSEIKDES</sequence>
<gene>
    <name evidence="1" type="primary">tlp</name>
    <name type="ordered locus">BALH_3249</name>
</gene>
<protein>
    <recommendedName>
        <fullName evidence="1">Small, acid-soluble spore protein Tlp</fullName>
    </recommendedName>
</protein>
<reference key="1">
    <citation type="journal article" date="2007" name="J. Bacteriol.">
        <title>The complete genome sequence of Bacillus thuringiensis Al Hakam.</title>
        <authorList>
            <person name="Challacombe J.F."/>
            <person name="Altherr M.R."/>
            <person name="Xie G."/>
            <person name="Bhotika S.S."/>
            <person name="Brown N."/>
            <person name="Bruce D."/>
            <person name="Campbell C.S."/>
            <person name="Campbell M.L."/>
            <person name="Chen J."/>
            <person name="Chertkov O."/>
            <person name="Cleland C."/>
            <person name="Dimitrijevic M."/>
            <person name="Doggett N.A."/>
            <person name="Fawcett J.J."/>
            <person name="Glavina T."/>
            <person name="Goodwin L.A."/>
            <person name="Green L.D."/>
            <person name="Han C.S."/>
            <person name="Hill K.K."/>
            <person name="Hitchcock P."/>
            <person name="Jackson P.J."/>
            <person name="Keim P."/>
            <person name="Kewalramani A.R."/>
            <person name="Longmire J."/>
            <person name="Lucas S."/>
            <person name="Malfatti S."/>
            <person name="Martinez D."/>
            <person name="McMurry K."/>
            <person name="Meincke L.J."/>
            <person name="Misra M."/>
            <person name="Moseman B.L."/>
            <person name="Mundt M."/>
            <person name="Munk A.C."/>
            <person name="Okinaka R.T."/>
            <person name="Parson-Quintana B."/>
            <person name="Reilly L.P."/>
            <person name="Richardson P."/>
            <person name="Robinson D.L."/>
            <person name="Saunders E."/>
            <person name="Tapia R."/>
            <person name="Tesmer J.G."/>
            <person name="Thayer N."/>
            <person name="Thompson L.S."/>
            <person name="Tice H."/>
            <person name="Ticknor L.O."/>
            <person name="Wills P.L."/>
            <person name="Gilna P."/>
            <person name="Brettin T.S."/>
        </authorList>
    </citation>
    <scope>NUCLEOTIDE SEQUENCE [LARGE SCALE GENOMIC DNA]</scope>
    <source>
        <strain>Al Hakam</strain>
    </source>
</reference>